<keyword id="KW-1015">Disulfide bond</keyword>
<keyword id="KW-0325">Glycoprotein</keyword>
<keyword id="KW-0393">Immunoglobulin domain</keyword>
<keyword id="KW-0481">Metalloenzyme inhibitor</keyword>
<keyword id="KW-0483">Metalloprotease inhibitor</keyword>
<keyword id="KW-0646">Protease inhibitor</keyword>
<keyword id="KW-1185">Reference proteome</keyword>
<keyword id="KW-0677">Repeat</keyword>
<keyword id="KW-0964">Secreted</keyword>
<keyword id="KW-0722">Serine protease inhibitor</keyword>
<keyword id="KW-0732">Signal</keyword>
<protein>
    <recommendedName>
        <fullName>WAP, Kazal, immunoglobulin, Kunitz and NTR domain-containing protein 2</fullName>
    </recommendedName>
</protein>
<comment type="function">
    <text evidence="1">Protease-inhibitor that contains multiple distinct protease inhibitor domains. Probably has serine protease- and metalloprotease-inhibitor activity. Inhibits the biological activity of mature myostatin, but not activin (By similarity).</text>
</comment>
<comment type="subunit">
    <text evidence="1">Interacts with both mature and propeptide myostatin/MSTN.</text>
</comment>
<comment type="subcellular location">
    <subcellularLocation>
        <location evidence="1">Secreted</location>
    </subcellularLocation>
</comment>
<comment type="similarity">
    <text evidence="7">Belongs to the WFIKKN family.</text>
</comment>
<feature type="signal peptide" evidence="1">
    <location>
        <begin position="1"/>
        <end position="32"/>
    </location>
</feature>
<feature type="chain" id="PRO_0000307819" description="WAP, Kazal, immunoglobulin, Kunitz and NTR domain-containing protein 2">
    <location>
        <begin position="33"/>
        <end position="574"/>
    </location>
</feature>
<feature type="domain" description="WAP" evidence="5">
    <location>
        <begin position="37"/>
        <end position="90"/>
    </location>
</feature>
<feature type="domain" description="Kazal-like" evidence="6">
    <location>
        <begin position="124"/>
        <end position="175"/>
    </location>
</feature>
<feature type="domain" description="Ig-like C2-type">
    <location>
        <begin position="208"/>
        <end position="301"/>
    </location>
</feature>
<feature type="domain" description="BPTI/Kunitz inhibitor 1" evidence="3">
    <location>
        <begin position="326"/>
        <end position="376"/>
    </location>
</feature>
<feature type="domain" description="BPTI/Kunitz inhibitor 2" evidence="3">
    <location>
        <begin position="384"/>
        <end position="434"/>
    </location>
</feature>
<feature type="domain" description="NTR" evidence="4">
    <location>
        <begin position="443"/>
        <end position="564"/>
    </location>
</feature>
<feature type="site" description="Reactive bond" evidence="6">
    <location>
        <begin position="138"/>
        <end position="139"/>
    </location>
</feature>
<feature type="glycosylation site" description="N-linked (GlcNAc...) asparagine" evidence="2">
    <location>
        <position position="517"/>
    </location>
</feature>
<feature type="disulfide bond" evidence="1">
    <location>
        <begin position="44"/>
        <end position="77"/>
    </location>
</feature>
<feature type="disulfide bond" evidence="1">
    <location>
        <begin position="60"/>
        <end position="81"/>
    </location>
</feature>
<feature type="disulfide bond" evidence="1">
    <location>
        <begin position="64"/>
        <end position="76"/>
    </location>
</feature>
<feature type="disulfide bond" evidence="1">
    <location>
        <begin position="70"/>
        <end position="86"/>
    </location>
</feature>
<feature type="disulfide bond" evidence="1">
    <location>
        <begin position="132"/>
        <end position="162"/>
    </location>
</feature>
<feature type="disulfide bond" evidence="1">
    <location>
        <begin position="136"/>
        <end position="155"/>
    </location>
</feature>
<feature type="disulfide bond" evidence="1">
    <location>
        <begin position="144"/>
        <end position="173"/>
    </location>
</feature>
<feature type="disulfide bond" evidence="1">
    <location>
        <begin position="229"/>
        <end position="285"/>
    </location>
</feature>
<feature type="disulfide bond" evidence="1">
    <location>
        <begin position="326"/>
        <end position="376"/>
    </location>
</feature>
<feature type="disulfide bond" evidence="1">
    <location>
        <begin position="335"/>
        <end position="359"/>
    </location>
</feature>
<feature type="disulfide bond" evidence="1">
    <location>
        <begin position="351"/>
        <end position="372"/>
    </location>
</feature>
<feature type="disulfide bond" evidence="1">
    <location>
        <begin position="384"/>
        <end position="434"/>
    </location>
</feature>
<feature type="disulfide bond" evidence="1">
    <location>
        <begin position="393"/>
        <end position="417"/>
    </location>
</feature>
<feature type="disulfide bond" evidence="1">
    <location>
        <begin position="409"/>
        <end position="430"/>
    </location>
</feature>
<feature type="disulfide bond" evidence="1">
    <location>
        <begin position="443"/>
        <end position="513"/>
    </location>
</feature>
<feature type="disulfide bond" evidence="1">
    <location>
        <begin position="446"/>
        <end position="515"/>
    </location>
</feature>
<feature type="disulfide bond" evidence="1">
    <location>
        <begin position="457"/>
        <end position="564"/>
    </location>
</feature>
<accession>Q08E66</accession>
<gene>
    <name type="primary">WFIKKN2</name>
</gene>
<reference key="1">
    <citation type="submission" date="2006-09" db="EMBL/GenBank/DDBJ databases">
        <authorList>
            <consortium name="NIH - Mammalian Gene Collection (MGC) project"/>
        </authorList>
    </citation>
    <scope>NUCLEOTIDE SEQUENCE [LARGE SCALE MRNA]</scope>
    <source>
        <strain>Hereford</strain>
        <tissue>Hippocampus</tissue>
    </source>
</reference>
<proteinExistence type="evidence at transcript level"/>
<sequence>MWALRGCRSGSRWGQGAALLLLLLGVPPRGLALPPLRYSHAGICPNDMNPNLWVDAQSTCKRECETDQECETYEKCCPNVCGTKSCVAARYMDVKGKKGPVGMPKEATCDHFMCLQQGSECDIWDGQPVCKCRDRCEKEPSFTCASDGLTYYNRCYMDAEACSKGITLAVVTCRYHFTWPNTSPSPPETTVHPTTAPPETPGLDATAPALLNHPAHQSVTVGETVSFLCDVVGRPRPEITWEKQLEDRENVVMRPNHVRGNVVVTNIAQLVIYNAQPQDAGIYTCTARNAAGVLRADFPLSVVSGGQASATAESSPNGTALPAAECLKPPDSDDCGEEQTRWYFDAQANNCLTFTFGHCHRNRNHFETYEACMLACMSGSLAMCSLPALQGPCKAYVPRWAYNSQTGQCQSFVYGGCEGNGNNFESREDCEESCPFPRGNQRCRACKPRQKLVTSFCRSDFVILGRISELTEEPDSGRALVTVDEVLKDEKMGLKFLGQEPLEVTLLHMDWTCPCPNVTVGEAPLIIMGEVDGGMAVLRPDSFVGASSTRRARKLREVMHKKTCDVLKDFPGLQ</sequence>
<dbReference type="EMBL" id="BC123391">
    <property type="protein sequence ID" value="AAI23392.1"/>
    <property type="molecule type" value="mRNA"/>
</dbReference>
<dbReference type="RefSeq" id="NP_001070353.1">
    <property type="nucleotide sequence ID" value="NM_001076885.1"/>
</dbReference>
<dbReference type="SMR" id="Q08E66"/>
<dbReference type="FunCoup" id="Q08E66">
    <property type="interactions" value="81"/>
</dbReference>
<dbReference type="STRING" id="9913.ENSBTAP00000000973"/>
<dbReference type="GlyCosmos" id="Q08E66">
    <property type="glycosylation" value="1 site, No reported glycans"/>
</dbReference>
<dbReference type="GlyGen" id="Q08E66">
    <property type="glycosylation" value="1 site"/>
</dbReference>
<dbReference type="PaxDb" id="9913-ENSBTAP00000000973"/>
<dbReference type="Ensembl" id="ENSBTAT00000000973.5">
    <property type="protein sequence ID" value="ENSBTAP00000000973.5"/>
    <property type="gene ID" value="ENSBTAG00000000731.5"/>
</dbReference>
<dbReference type="GeneID" id="531979"/>
<dbReference type="KEGG" id="bta:531979"/>
<dbReference type="CTD" id="124857"/>
<dbReference type="VEuPathDB" id="HostDB:ENSBTAG00000000731"/>
<dbReference type="VGNC" id="VGNC:55888">
    <property type="gene designation" value="WFIKKN2"/>
</dbReference>
<dbReference type="eggNOG" id="KOG4597">
    <property type="taxonomic scope" value="Eukaryota"/>
</dbReference>
<dbReference type="GeneTree" id="ENSGT00940000160624"/>
<dbReference type="InParanoid" id="Q08E66"/>
<dbReference type="OMA" id="LFTRWMW"/>
<dbReference type="OrthoDB" id="8187079at2759"/>
<dbReference type="Proteomes" id="UP000009136">
    <property type="component" value="Chromosome 19"/>
</dbReference>
<dbReference type="Bgee" id="ENSBTAG00000000731">
    <property type="expression patterns" value="Expressed in anterior segment of eyeball and 83 other cell types or tissues"/>
</dbReference>
<dbReference type="GO" id="GO:0005615">
    <property type="term" value="C:extracellular space"/>
    <property type="evidence" value="ECO:0000318"/>
    <property type="project" value="GO_Central"/>
</dbReference>
<dbReference type="GO" id="GO:0048019">
    <property type="term" value="F:receptor antagonist activity"/>
    <property type="evidence" value="ECO:0000318"/>
    <property type="project" value="GO_Central"/>
</dbReference>
<dbReference type="GO" id="GO:0004867">
    <property type="term" value="F:serine-type endopeptidase inhibitor activity"/>
    <property type="evidence" value="ECO:0007669"/>
    <property type="project" value="UniProtKB-KW"/>
</dbReference>
<dbReference type="GO" id="GO:0050431">
    <property type="term" value="F:transforming growth factor beta binding"/>
    <property type="evidence" value="ECO:0000318"/>
    <property type="project" value="GO_Central"/>
</dbReference>
<dbReference type="GO" id="GO:0055001">
    <property type="term" value="P:muscle cell development"/>
    <property type="evidence" value="ECO:0007669"/>
    <property type="project" value="Ensembl"/>
</dbReference>
<dbReference type="GO" id="GO:0030512">
    <property type="term" value="P:negative regulation of transforming growth factor beta receptor signaling pathway"/>
    <property type="evidence" value="ECO:0007669"/>
    <property type="project" value="Ensembl"/>
</dbReference>
<dbReference type="GO" id="GO:0060021">
    <property type="term" value="P:roof of mouth development"/>
    <property type="evidence" value="ECO:0007669"/>
    <property type="project" value="Ensembl"/>
</dbReference>
<dbReference type="GO" id="GO:0001501">
    <property type="term" value="P:skeletal system development"/>
    <property type="evidence" value="ECO:0007669"/>
    <property type="project" value="Ensembl"/>
</dbReference>
<dbReference type="GO" id="GO:0007179">
    <property type="term" value="P:transforming growth factor beta receptor signaling pathway"/>
    <property type="evidence" value="ECO:0000318"/>
    <property type="project" value="GO_Central"/>
</dbReference>
<dbReference type="CDD" id="cd05765">
    <property type="entry name" value="IgI_3_WFIKKN-like"/>
    <property type="match status" value="1"/>
</dbReference>
<dbReference type="CDD" id="cd00104">
    <property type="entry name" value="KAZAL_FS"/>
    <property type="match status" value="1"/>
</dbReference>
<dbReference type="CDD" id="cd22605">
    <property type="entry name" value="Kunitz_WFIKKN_1-like"/>
    <property type="match status" value="1"/>
</dbReference>
<dbReference type="CDD" id="cd22606">
    <property type="entry name" value="Kunitz_WFIKKN_2-like"/>
    <property type="match status" value="1"/>
</dbReference>
<dbReference type="CDD" id="cd03575">
    <property type="entry name" value="NTR_WFIKKN"/>
    <property type="match status" value="1"/>
</dbReference>
<dbReference type="FunFam" id="4.10.410.10:FF:000002">
    <property type="entry name" value="WAP, follistatin/kazal, immunoglobulin, kunitz and netrin domain-containing 2"/>
    <property type="match status" value="1"/>
</dbReference>
<dbReference type="FunFam" id="2.40.50.120:FF:000004">
    <property type="entry name" value="WAP, Kazal, immunoglobulin, Kunitz and NTR domain-containing protein 2"/>
    <property type="match status" value="1"/>
</dbReference>
<dbReference type="FunFam" id="2.60.40.10:FF:000473">
    <property type="entry name" value="WAP, Kazal, immunoglobulin, Kunitz and NTR domain-containing protein 2"/>
    <property type="match status" value="1"/>
</dbReference>
<dbReference type="FunFam" id="3.30.60.30:FF:000014">
    <property type="entry name" value="WAP, Kazal, immunoglobulin, Kunitz and NTR domain-containing protein 2"/>
    <property type="match status" value="1"/>
</dbReference>
<dbReference type="FunFam" id="4.10.410.10:FF:000009">
    <property type="entry name" value="WAP, Kazal, immunoglobulin, Kunitz and NTR domain-containing protein 2"/>
    <property type="match status" value="1"/>
</dbReference>
<dbReference type="FunFam" id="4.10.75.10:FF:000002">
    <property type="entry name" value="WAP, Kazal, immunoglobulin, Kunitz and NTR domain-containing protein 2"/>
    <property type="match status" value="1"/>
</dbReference>
<dbReference type="Gene3D" id="2.40.50.120">
    <property type="match status" value="1"/>
</dbReference>
<dbReference type="Gene3D" id="3.30.60.30">
    <property type="match status" value="1"/>
</dbReference>
<dbReference type="Gene3D" id="4.10.75.10">
    <property type="entry name" value="Elafin-like"/>
    <property type="match status" value="1"/>
</dbReference>
<dbReference type="Gene3D" id="2.60.40.10">
    <property type="entry name" value="Immunoglobulins"/>
    <property type="match status" value="1"/>
</dbReference>
<dbReference type="Gene3D" id="4.10.410.10">
    <property type="entry name" value="Pancreatic trypsin inhibitor Kunitz domain"/>
    <property type="match status" value="2"/>
</dbReference>
<dbReference type="InterPro" id="IPR036645">
    <property type="entry name" value="Elafin-like_sf"/>
</dbReference>
<dbReference type="InterPro" id="IPR007110">
    <property type="entry name" value="Ig-like_dom"/>
</dbReference>
<dbReference type="InterPro" id="IPR036179">
    <property type="entry name" value="Ig-like_dom_sf"/>
</dbReference>
<dbReference type="InterPro" id="IPR013783">
    <property type="entry name" value="Ig-like_fold"/>
</dbReference>
<dbReference type="InterPro" id="IPR013098">
    <property type="entry name" value="Ig_I-set"/>
</dbReference>
<dbReference type="InterPro" id="IPR003599">
    <property type="entry name" value="Ig_sub"/>
</dbReference>
<dbReference type="InterPro" id="IPR003598">
    <property type="entry name" value="Ig_sub2"/>
</dbReference>
<dbReference type="InterPro" id="IPR002350">
    <property type="entry name" value="Kazal_dom"/>
</dbReference>
<dbReference type="InterPro" id="IPR036058">
    <property type="entry name" value="Kazal_dom_sf"/>
</dbReference>
<dbReference type="InterPro" id="IPR002223">
    <property type="entry name" value="Kunitz_BPTI"/>
</dbReference>
<dbReference type="InterPro" id="IPR036880">
    <property type="entry name" value="Kunitz_BPTI_sf"/>
</dbReference>
<dbReference type="InterPro" id="IPR001134">
    <property type="entry name" value="Netrin_domain"/>
</dbReference>
<dbReference type="InterPro" id="IPR018933">
    <property type="entry name" value="Netrin_module_non-TIMP"/>
</dbReference>
<dbReference type="InterPro" id="IPR020901">
    <property type="entry name" value="Prtase_inh_Kunz-CS"/>
</dbReference>
<dbReference type="InterPro" id="IPR008993">
    <property type="entry name" value="TIMP-like_OB-fold"/>
</dbReference>
<dbReference type="InterPro" id="IPR008197">
    <property type="entry name" value="WAP_dom"/>
</dbReference>
<dbReference type="InterPro" id="IPR033638">
    <property type="entry name" value="WFIKKN1/2_Ig-like_3"/>
</dbReference>
<dbReference type="PANTHER" id="PTHR45938">
    <property type="entry name" value="ACP24A4-RELATED"/>
    <property type="match status" value="1"/>
</dbReference>
<dbReference type="PANTHER" id="PTHR45938:SF7">
    <property type="entry name" value="WAP, KAZAL, IMMUNOGLOBULIN, KUNITZ AND NTR DOMAIN-CONTAINING PROTEIN 2"/>
    <property type="match status" value="1"/>
</dbReference>
<dbReference type="Pfam" id="PF07679">
    <property type="entry name" value="I-set"/>
    <property type="match status" value="1"/>
</dbReference>
<dbReference type="Pfam" id="PF00014">
    <property type="entry name" value="Kunitz_BPTI"/>
    <property type="match status" value="2"/>
</dbReference>
<dbReference type="Pfam" id="PF01759">
    <property type="entry name" value="NTR"/>
    <property type="match status" value="1"/>
</dbReference>
<dbReference type="Pfam" id="PF00095">
    <property type="entry name" value="WAP"/>
    <property type="match status" value="1"/>
</dbReference>
<dbReference type="PRINTS" id="PR00759">
    <property type="entry name" value="BASICPTASE"/>
</dbReference>
<dbReference type="SMART" id="SM00409">
    <property type="entry name" value="IG"/>
    <property type="match status" value="1"/>
</dbReference>
<dbReference type="SMART" id="SM00408">
    <property type="entry name" value="IGc2"/>
    <property type="match status" value="1"/>
</dbReference>
<dbReference type="SMART" id="SM00131">
    <property type="entry name" value="KU"/>
    <property type="match status" value="2"/>
</dbReference>
<dbReference type="SMART" id="SM00217">
    <property type="entry name" value="WAP"/>
    <property type="match status" value="1"/>
</dbReference>
<dbReference type="SUPFAM" id="SSF57362">
    <property type="entry name" value="BPTI-like"/>
    <property type="match status" value="2"/>
</dbReference>
<dbReference type="SUPFAM" id="SSF57256">
    <property type="entry name" value="Elafin-like"/>
    <property type="match status" value="1"/>
</dbReference>
<dbReference type="SUPFAM" id="SSF48726">
    <property type="entry name" value="Immunoglobulin"/>
    <property type="match status" value="1"/>
</dbReference>
<dbReference type="SUPFAM" id="SSF100895">
    <property type="entry name" value="Kazal-type serine protease inhibitors"/>
    <property type="match status" value="1"/>
</dbReference>
<dbReference type="SUPFAM" id="SSF50242">
    <property type="entry name" value="TIMP-like"/>
    <property type="match status" value="1"/>
</dbReference>
<dbReference type="PROSITE" id="PS00280">
    <property type="entry name" value="BPTI_KUNITZ_1"/>
    <property type="match status" value="1"/>
</dbReference>
<dbReference type="PROSITE" id="PS50279">
    <property type="entry name" value="BPTI_KUNITZ_2"/>
    <property type="match status" value="2"/>
</dbReference>
<dbReference type="PROSITE" id="PS50835">
    <property type="entry name" value="IG_LIKE"/>
    <property type="match status" value="1"/>
</dbReference>
<dbReference type="PROSITE" id="PS51465">
    <property type="entry name" value="KAZAL_2"/>
    <property type="match status" value="1"/>
</dbReference>
<dbReference type="PROSITE" id="PS50189">
    <property type="entry name" value="NTR"/>
    <property type="match status" value="1"/>
</dbReference>
<dbReference type="PROSITE" id="PS51390">
    <property type="entry name" value="WAP"/>
    <property type="match status" value="1"/>
</dbReference>
<name>WFKN2_BOVIN</name>
<evidence type="ECO:0000250" key="1"/>
<evidence type="ECO:0000255" key="2"/>
<evidence type="ECO:0000255" key="3">
    <source>
        <dbReference type="PROSITE-ProRule" id="PRU00031"/>
    </source>
</evidence>
<evidence type="ECO:0000255" key="4">
    <source>
        <dbReference type="PROSITE-ProRule" id="PRU00295"/>
    </source>
</evidence>
<evidence type="ECO:0000255" key="5">
    <source>
        <dbReference type="PROSITE-ProRule" id="PRU00722"/>
    </source>
</evidence>
<evidence type="ECO:0000255" key="6">
    <source>
        <dbReference type="PROSITE-ProRule" id="PRU00798"/>
    </source>
</evidence>
<evidence type="ECO:0000305" key="7"/>
<organism>
    <name type="scientific">Bos taurus</name>
    <name type="common">Bovine</name>
    <dbReference type="NCBI Taxonomy" id="9913"/>
    <lineage>
        <taxon>Eukaryota</taxon>
        <taxon>Metazoa</taxon>
        <taxon>Chordata</taxon>
        <taxon>Craniata</taxon>
        <taxon>Vertebrata</taxon>
        <taxon>Euteleostomi</taxon>
        <taxon>Mammalia</taxon>
        <taxon>Eutheria</taxon>
        <taxon>Laurasiatheria</taxon>
        <taxon>Artiodactyla</taxon>
        <taxon>Ruminantia</taxon>
        <taxon>Pecora</taxon>
        <taxon>Bovidae</taxon>
        <taxon>Bovinae</taxon>
        <taxon>Bos</taxon>
    </lineage>
</organism>